<proteinExistence type="inferred from homology"/>
<sequence length="258" mass="28849">MLMVVSPAKSLDFESPLPSGLPATRPPMLDESARLADILRQMAPQDIAGLMQVSDKIAALNVARFAEWHADYSAPQARQAVFAFNGDVYEGLDAASMDRAGLDWLQPRLNILSGLYGLLRPLDLMLPYRLEMGTRLANPRGKDLYAFWGERITTELNARLQQDGSQVLVNLASDEYFRSVKPAQLAATVWTPVFRDSKAGGPYKIVSFWAKRARGLMVRWMAEQRIESPDDLRAFDVEGYRFNPAASNGTTLVFLRDH</sequence>
<protein>
    <recommendedName>
        <fullName evidence="1">UPF0246 protein LHK_02295</fullName>
    </recommendedName>
</protein>
<accession>C1DAG4</accession>
<gene>
    <name type="ordered locus">LHK_02295</name>
</gene>
<dbReference type="EMBL" id="CP001154">
    <property type="protein sequence ID" value="ACO75279.1"/>
    <property type="molecule type" value="Genomic_DNA"/>
</dbReference>
<dbReference type="RefSeq" id="WP_012697765.1">
    <property type="nucleotide sequence ID" value="NC_012559.1"/>
</dbReference>
<dbReference type="SMR" id="C1DAG4"/>
<dbReference type="STRING" id="557598.LHK_02295"/>
<dbReference type="KEGG" id="lhk:LHK_02295"/>
<dbReference type="eggNOG" id="COG3022">
    <property type="taxonomic scope" value="Bacteria"/>
</dbReference>
<dbReference type="HOGENOM" id="CLU_061989_0_0_4"/>
<dbReference type="Proteomes" id="UP000002010">
    <property type="component" value="Chromosome"/>
</dbReference>
<dbReference type="GO" id="GO:0005829">
    <property type="term" value="C:cytosol"/>
    <property type="evidence" value="ECO:0007669"/>
    <property type="project" value="TreeGrafter"/>
</dbReference>
<dbReference type="GO" id="GO:0033194">
    <property type="term" value="P:response to hydroperoxide"/>
    <property type="evidence" value="ECO:0007669"/>
    <property type="project" value="TreeGrafter"/>
</dbReference>
<dbReference type="HAMAP" id="MF_00652">
    <property type="entry name" value="UPF0246"/>
    <property type="match status" value="1"/>
</dbReference>
<dbReference type="InterPro" id="IPR005583">
    <property type="entry name" value="YaaA"/>
</dbReference>
<dbReference type="NCBIfam" id="NF002542">
    <property type="entry name" value="PRK02101.1-3"/>
    <property type="match status" value="1"/>
</dbReference>
<dbReference type="PANTHER" id="PTHR30283:SF4">
    <property type="entry name" value="PEROXIDE STRESS RESISTANCE PROTEIN YAAA"/>
    <property type="match status" value="1"/>
</dbReference>
<dbReference type="PANTHER" id="PTHR30283">
    <property type="entry name" value="PEROXIDE STRESS RESPONSE PROTEIN YAAA"/>
    <property type="match status" value="1"/>
</dbReference>
<dbReference type="Pfam" id="PF03883">
    <property type="entry name" value="H2O2_YaaD"/>
    <property type="match status" value="1"/>
</dbReference>
<keyword id="KW-1185">Reference proteome</keyword>
<name>Y2295_LARHH</name>
<evidence type="ECO:0000255" key="1">
    <source>
        <dbReference type="HAMAP-Rule" id="MF_00652"/>
    </source>
</evidence>
<reference key="1">
    <citation type="journal article" date="2009" name="PLoS Genet.">
        <title>The complete genome and proteome of Laribacter hongkongensis reveal potential mechanisms for adaptations to different temperatures and habitats.</title>
        <authorList>
            <person name="Woo P.C.Y."/>
            <person name="Lau S.K.P."/>
            <person name="Tse H."/>
            <person name="Teng J.L.L."/>
            <person name="Curreem S.O."/>
            <person name="Tsang A.K.L."/>
            <person name="Fan R.Y.Y."/>
            <person name="Wong G.K.M."/>
            <person name="Huang Y."/>
            <person name="Loman N.J."/>
            <person name="Snyder L.A.S."/>
            <person name="Cai J.J."/>
            <person name="Huang J.-D."/>
            <person name="Mak W."/>
            <person name="Pallen M.J."/>
            <person name="Lok S."/>
            <person name="Yuen K.-Y."/>
        </authorList>
    </citation>
    <scope>NUCLEOTIDE SEQUENCE [LARGE SCALE GENOMIC DNA]</scope>
    <source>
        <strain>HLHK9</strain>
    </source>
</reference>
<organism>
    <name type="scientific">Laribacter hongkongensis (strain HLHK9)</name>
    <dbReference type="NCBI Taxonomy" id="557598"/>
    <lineage>
        <taxon>Bacteria</taxon>
        <taxon>Pseudomonadati</taxon>
        <taxon>Pseudomonadota</taxon>
        <taxon>Betaproteobacteria</taxon>
        <taxon>Neisseriales</taxon>
        <taxon>Aquaspirillaceae</taxon>
        <taxon>Laribacter</taxon>
    </lineage>
</organism>
<comment type="similarity">
    <text evidence="1">Belongs to the UPF0246 family.</text>
</comment>
<feature type="chain" id="PRO_1000200422" description="UPF0246 protein LHK_02295">
    <location>
        <begin position="1"/>
        <end position="258"/>
    </location>
</feature>